<comment type="function">
    <text evidence="1">Bifunctional serine/threonine kinase and phosphorylase involved in the regulation of the pyruvate, phosphate dikinase (PPDK) by catalyzing its phosphorylation/dephosphorylation.</text>
</comment>
<comment type="catalytic activity">
    <reaction evidence="1">
        <text>N(tele)-phospho-L-histidyl/L-threonyl-[pyruvate, phosphate dikinase] + ADP = N(tele)-phospho-L-histidyl/O-phospho-L-threonyl-[pyruvate, phosphate dikinase] + AMP + H(+)</text>
        <dbReference type="Rhea" id="RHEA:43692"/>
        <dbReference type="Rhea" id="RHEA-COMP:10650"/>
        <dbReference type="Rhea" id="RHEA-COMP:10651"/>
        <dbReference type="ChEBI" id="CHEBI:15378"/>
        <dbReference type="ChEBI" id="CHEBI:30013"/>
        <dbReference type="ChEBI" id="CHEBI:61977"/>
        <dbReference type="ChEBI" id="CHEBI:83586"/>
        <dbReference type="ChEBI" id="CHEBI:456215"/>
        <dbReference type="ChEBI" id="CHEBI:456216"/>
        <dbReference type="EC" id="2.7.11.32"/>
    </reaction>
</comment>
<comment type="catalytic activity">
    <reaction evidence="1">
        <text>N(tele)-phospho-L-histidyl/O-phospho-L-threonyl-[pyruvate, phosphate dikinase] + phosphate + H(+) = N(tele)-phospho-L-histidyl/L-threonyl-[pyruvate, phosphate dikinase] + diphosphate</text>
        <dbReference type="Rhea" id="RHEA:43696"/>
        <dbReference type="Rhea" id="RHEA-COMP:10650"/>
        <dbReference type="Rhea" id="RHEA-COMP:10651"/>
        <dbReference type="ChEBI" id="CHEBI:15378"/>
        <dbReference type="ChEBI" id="CHEBI:30013"/>
        <dbReference type="ChEBI" id="CHEBI:33019"/>
        <dbReference type="ChEBI" id="CHEBI:43474"/>
        <dbReference type="ChEBI" id="CHEBI:61977"/>
        <dbReference type="ChEBI" id="CHEBI:83586"/>
        <dbReference type="EC" id="2.7.4.27"/>
    </reaction>
</comment>
<comment type="similarity">
    <text evidence="1">Belongs to the pyruvate, phosphate/water dikinase regulatory protein family. PDRP subfamily.</text>
</comment>
<keyword id="KW-0418">Kinase</keyword>
<keyword id="KW-0547">Nucleotide-binding</keyword>
<keyword id="KW-0723">Serine/threonine-protein kinase</keyword>
<keyword id="KW-0808">Transferase</keyword>
<accession>A7X2W0</accession>
<feature type="chain" id="PRO_0000316747" description="Putative pyruvate, phosphate dikinase regulatory protein">
    <location>
        <begin position="1"/>
        <end position="272"/>
    </location>
</feature>
<feature type="binding site" evidence="1">
    <location>
        <begin position="151"/>
        <end position="158"/>
    </location>
    <ligand>
        <name>ADP</name>
        <dbReference type="ChEBI" id="CHEBI:456216"/>
    </ligand>
</feature>
<gene>
    <name type="ordered locus">SAHV_1550</name>
</gene>
<name>PDRP_STAA1</name>
<proteinExistence type="inferred from homology"/>
<organism>
    <name type="scientific">Staphylococcus aureus (strain Mu3 / ATCC 700698)</name>
    <dbReference type="NCBI Taxonomy" id="418127"/>
    <lineage>
        <taxon>Bacteria</taxon>
        <taxon>Bacillati</taxon>
        <taxon>Bacillota</taxon>
        <taxon>Bacilli</taxon>
        <taxon>Bacillales</taxon>
        <taxon>Staphylococcaceae</taxon>
        <taxon>Staphylococcus</taxon>
    </lineage>
</organism>
<protein>
    <recommendedName>
        <fullName evidence="1">Putative pyruvate, phosphate dikinase regulatory protein</fullName>
        <shortName evidence="1">PPDK regulatory protein</shortName>
        <ecNumber evidence="1">2.7.11.32</ecNumber>
        <ecNumber evidence="1">2.7.4.27</ecNumber>
    </recommendedName>
</protein>
<sequence>MEKIKIIVASDSIGETAELVARAGISQFNPKQCKNELLRYPYIESFEDVDEVIQVAKDTNAIIVYTLIKPEMKQYMSEKVAEFQLKSVDIMGPLMDLLSASVEEKPYNEPGIVHRLDDAYFKKIDAIEFAVKYDDGKDPKGLPKADIVLLGISRTSKTPLSQYLAHKSYKVMNVPIVPEVTPPDGLYDIDPKKCIALKISEEKLNRIRKERLKQLGLGDTARYATEARIQEELNYFEEIVSEIGCPVIDVSQKAIEETANDIIHYIEQNKSK</sequence>
<evidence type="ECO:0000255" key="1">
    <source>
        <dbReference type="HAMAP-Rule" id="MF_00921"/>
    </source>
</evidence>
<reference key="1">
    <citation type="journal article" date="2008" name="Antimicrob. Agents Chemother.">
        <title>Mutated response regulator graR is responsible for phenotypic conversion of Staphylococcus aureus from heterogeneous vancomycin-intermediate resistance to vancomycin-intermediate resistance.</title>
        <authorList>
            <person name="Neoh H.-M."/>
            <person name="Cui L."/>
            <person name="Yuzawa H."/>
            <person name="Takeuchi F."/>
            <person name="Matsuo M."/>
            <person name="Hiramatsu K."/>
        </authorList>
    </citation>
    <scope>NUCLEOTIDE SEQUENCE [LARGE SCALE GENOMIC DNA]</scope>
    <source>
        <strain>Mu3 / ATCC 700698</strain>
    </source>
</reference>
<dbReference type="EC" id="2.7.11.32" evidence="1"/>
<dbReference type="EC" id="2.7.4.27" evidence="1"/>
<dbReference type="EMBL" id="AP009324">
    <property type="protein sequence ID" value="BAF78433.1"/>
    <property type="molecule type" value="Genomic_DNA"/>
</dbReference>
<dbReference type="RefSeq" id="WP_000411298.1">
    <property type="nucleotide sequence ID" value="NC_009782.1"/>
</dbReference>
<dbReference type="SMR" id="A7X2W0"/>
<dbReference type="KEGG" id="saw:SAHV_1550"/>
<dbReference type="HOGENOM" id="CLU_046206_2_1_9"/>
<dbReference type="GO" id="GO:0043531">
    <property type="term" value="F:ADP binding"/>
    <property type="evidence" value="ECO:0007669"/>
    <property type="project" value="UniProtKB-UniRule"/>
</dbReference>
<dbReference type="GO" id="GO:0005524">
    <property type="term" value="F:ATP binding"/>
    <property type="evidence" value="ECO:0007669"/>
    <property type="project" value="InterPro"/>
</dbReference>
<dbReference type="GO" id="GO:0016776">
    <property type="term" value="F:phosphotransferase activity, phosphate group as acceptor"/>
    <property type="evidence" value="ECO:0007669"/>
    <property type="project" value="UniProtKB-UniRule"/>
</dbReference>
<dbReference type="GO" id="GO:0004674">
    <property type="term" value="F:protein serine/threonine kinase activity"/>
    <property type="evidence" value="ECO:0007669"/>
    <property type="project" value="UniProtKB-UniRule"/>
</dbReference>
<dbReference type="HAMAP" id="MF_00921">
    <property type="entry name" value="PDRP"/>
    <property type="match status" value="1"/>
</dbReference>
<dbReference type="InterPro" id="IPR005177">
    <property type="entry name" value="Kinase-pyrophosphorylase"/>
</dbReference>
<dbReference type="InterPro" id="IPR026565">
    <property type="entry name" value="PPDK_reg"/>
</dbReference>
<dbReference type="NCBIfam" id="NF003742">
    <property type="entry name" value="PRK05339.1"/>
    <property type="match status" value="1"/>
</dbReference>
<dbReference type="PANTHER" id="PTHR31756">
    <property type="entry name" value="PYRUVATE, PHOSPHATE DIKINASE REGULATORY PROTEIN 1, CHLOROPLASTIC"/>
    <property type="match status" value="1"/>
</dbReference>
<dbReference type="PANTHER" id="PTHR31756:SF3">
    <property type="entry name" value="PYRUVATE, PHOSPHATE DIKINASE REGULATORY PROTEIN 1, CHLOROPLASTIC"/>
    <property type="match status" value="1"/>
</dbReference>
<dbReference type="Pfam" id="PF03618">
    <property type="entry name" value="Kinase-PPPase"/>
    <property type="match status" value="1"/>
</dbReference>